<gene>
    <name evidence="1" type="primary">bioD</name>
    <name type="ordered locus">NMA0943</name>
</gene>
<proteinExistence type="inferred from homology"/>
<evidence type="ECO:0000255" key="1">
    <source>
        <dbReference type="HAMAP-Rule" id="MF_00336"/>
    </source>
</evidence>
<accession>Q9JV95</accession>
<accession>A1IQY5</accession>
<sequence>MKGVYFVSGIDTDIGKTIATGVLAKQLLQQGKSVITQKPVQTGCQNIADDIAVHRKIMGIPMQEADKQGLTMPEIFSYPASPHLAARLDGRALDLDKIRTATQQLAAQYEIVLVEGAGGLMVPLTENLLTIDYIRQQGYPVILITSGRLGSINHTLLSFAALKQYGIRLHSLVFNHIHDSRDAHVAQDSLNYLKCRLKDSFPEAEWLELAKTDAV</sequence>
<feature type="chain" id="PRO_0000187978" description="ATP-dependent dethiobiotin synthetase BioD">
    <location>
        <begin position="1"/>
        <end position="215"/>
    </location>
</feature>
<feature type="active site" evidence="1">
    <location>
        <position position="38"/>
    </location>
</feature>
<feature type="binding site" evidence="1">
    <location>
        <begin position="13"/>
        <end position="18"/>
    </location>
    <ligand>
        <name>ATP</name>
        <dbReference type="ChEBI" id="CHEBI:30616"/>
    </ligand>
</feature>
<feature type="binding site" evidence="1">
    <location>
        <position position="17"/>
    </location>
    <ligand>
        <name>Mg(2+)</name>
        <dbReference type="ChEBI" id="CHEBI:18420"/>
    </ligand>
</feature>
<feature type="binding site" evidence="1">
    <location>
        <position position="42"/>
    </location>
    <ligand>
        <name>substrate</name>
    </ligand>
</feature>
<feature type="binding site" evidence="1">
    <location>
        <position position="50"/>
    </location>
    <ligand>
        <name>ATP</name>
        <dbReference type="ChEBI" id="CHEBI:30616"/>
    </ligand>
</feature>
<feature type="binding site" evidence="1">
    <location>
        <position position="50"/>
    </location>
    <ligand>
        <name>Mg(2+)</name>
        <dbReference type="ChEBI" id="CHEBI:18420"/>
    </ligand>
</feature>
<feature type="binding site" evidence="1">
    <location>
        <begin position="115"/>
        <end position="118"/>
    </location>
    <ligand>
        <name>ATP</name>
        <dbReference type="ChEBI" id="CHEBI:30616"/>
    </ligand>
</feature>
<feature type="binding site" evidence="1">
    <location>
        <position position="115"/>
    </location>
    <ligand>
        <name>Mg(2+)</name>
        <dbReference type="ChEBI" id="CHEBI:18420"/>
    </ligand>
</feature>
<feature type="binding site" evidence="1">
    <location>
        <begin position="175"/>
        <end position="176"/>
    </location>
    <ligand>
        <name>ATP</name>
        <dbReference type="ChEBI" id="CHEBI:30616"/>
    </ligand>
</feature>
<dbReference type="EC" id="6.3.3.3" evidence="1"/>
<dbReference type="EMBL" id="AL157959">
    <property type="protein sequence ID" value="CAM08169.1"/>
    <property type="molecule type" value="Genomic_DNA"/>
</dbReference>
<dbReference type="PIR" id="G81940">
    <property type="entry name" value="G81940"/>
</dbReference>
<dbReference type="RefSeq" id="WP_002246077.1">
    <property type="nucleotide sequence ID" value="NC_003116.1"/>
</dbReference>
<dbReference type="SMR" id="Q9JV95"/>
<dbReference type="EnsemblBacteria" id="CAM08169">
    <property type="protein sequence ID" value="CAM08169"/>
    <property type="gene ID" value="NMA0943"/>
</dbReference>
<dbReference type="GeneID" id="93386440"/>
<dbReference type="KEGG" id="nma:NMA0943"/>
<dbReference type="HOGENOM" id="CLU_072551_3_0_4"/>
<dbReference type="UniPathway" id="UPA00078">
    <property type="reaction ID" value="UER00161"/>
</dbReference>
<dbReference type="Proteomes" id="UP000000626">
    <property type="component" value="Chromosome"/>
</dbReference>
<dbReference type="GO" id="GO:0005829">
    <property type="term" value="C:cytosol"/>
    <property type="evidence" value="ECO:0007669"/>
    <property type="project" value="TreeGrafter"/>
</dbReference>
<dbReference type="GO" id="GO:0005524">
    <property type="term" value="F:ATP binding"/>
    <property type="evidence" value="ECO:0007669"/>
    <property type="project" value="UniProtKB-UniRule"/>
</dbReference>
<dbReference type="GO" id="GO:0004141">
    <property type="term" value="F:dethiobiotin synthase activity"/>
    <property type="evidence" value="ECO:0007669"/>
    <property type="project" value="UniProtKB-UniRule"/>
</dbReference>
<dbReference type="GO" id="GO:0000287">
    <property type="term" value="F:magnesium ion binding"/>
    <property type="evidence" value="ECO:0007669"/>
    <property type="project" value="UniProtKB-UniRule"/>
</dbReference>
<dbReference type="GO" id="GO:0009102">
    <property type="term" value="P:biotin biosynthetic process"/>
    <property type="evidence" value="ECO:0007669"/>
    <property type="project" value="UniProtKB-UniRule"/>
</dbReference>
<dbReference type="CDD" id="cd03109">
    <property type="entry name" value="DTBS"/>
    <property type="match status" value="1"/>
</dbReference>
<dbReference type="FunFam" id="3.40.50.300:FF:000292">
    <property type="entry name" value="ATP-dependent dethiobiotin synthetase BioD"/>
    <property type="match status" value="1"/>
</dbReference>
<dbReference type="Gene3D" id="3.40.50.300">
    <property type="entry name" value="P-loop containing nucleotide triphosphate hydrolases"/>
    <property type="match status" value="1"/>
</dbReference>
<dbReference type="HAMAP" id="MF_00336">
    <property type="entry name" value="BioD"/>
    <property type="match status" value="1"/>
</dbReference>
<dbReference type="InterPro" id="IPR004472">
    <property type="entry name" value="DTB_synth_BioD"/>
</dbReference>
<dbReference type="InterPro" id="IPR027417">
    <property type="entry name" value="P-loop_NTPase"/>
</dbReference>
<dbReference type="NCBIfam" id="TIGR00347">
    <property type="entry name" value="bioD"/>
    <property type="match status" value="1"/>
</dbReference>
<dbReference type="PANTHER" id="PTHR43210:SF2">
    <property type="entry name" value="ATP-DEPENDENT DETHIOBIOTIN SYNTHETASE BIOD 2"/>
    <property type="match status" value="1"/>
</dbReference>
<dbReference type="PANTHER" id="PTHR43210">
    <property type="entry name" value="DETHIOBIOTIN SYNTHETASE"/>
    <property type="match status" value="1"/>
</dbReference>
<dbReference type="Pfam" id="PF13500">
    <property type="entry name" value="AAA_26"/>
    <property type="match status" value="1"/>
</dbReference>
<dbReference type="PIRSF" id="PIRSF006755">
    <property type="entry name" value="DTB_synth"/>
    <property type="match status" value="1"/>
</dbReference>
<dbReference type="SUPFAM" id="SSF52540">
    <property type="entry name" value="P-loop containing nucleoside triphosphate hydrolases"/>
    <property type="match status" value="1"/>
</dbReference>
<protein>
    <recommendedName>
        <fullName evidence="1">ATP-dependent dethiobiotin synthetase BioD</fullName>
        <ecNumber evidence="1">6.3.3.3</ecNumber>
    </recommendedName>
    <alternativeName>
        <fullName evidence="1">DTB synthetase</fullName>
        <shortName evidence="1">DTBS</shortName>
    </alternativeName>
    <alternativeName>
        <fullName evidence="1">Dethiobiotin synthase</fullName>
    </alternativeName>
</protein>
<comment type="function">
    <text evidence="1">Catalyzes a mechanistically unusual reaction, the ATP-dependent insertion of CO2 between the N7 and N8 nitrogen atoms of 7,8-diaminopelargonic acid (DAPA, also called 7,8-diammoniononanoate) to form a ureido ring.</text>
</comment>
<comment type="catalytic activity">
    <reaction evidence="1">
        <text>(7R,8S)-7,8-diammoniononanoate + CO2 + ATP = (4R,5S)-dethiobiotin + ADP + phosphate + 3 H(+)</text>
        <dbReference type="Rhea" id="RHEA:15805"/>
        <dbReference type="ChEBI" id="CHEBI:15378"/>
        <dbReference type="ChEBI" id="CHEBI:16526"/>
        <dbReference type="ChEBI" id="CHEBI:30616"/>
        <dbReference type="ChEBI" id="CHEBI:43474"/>
        <dbReference type="ChEBI" id="CHEBI:149469"/>
        <dbReference type="ChEBI" id="CHEBI:149473"/>
        <dbReference type="ChEBI" id="CHEBI:456216"/>
        <dbReference type="EC" id="6.3.3.3"/>
    </reaction>
</comment>
<comment type="cofactor">
    <cofactor evidence="1">
        <name>Mg(2+)</name>
        <dbReference type="ChEBI" id="CHEBI:18420"/>
    </cofactor>
</comment>
<comment type="pathway">
    <text evidence="1">Cofactor biosynthesis; biotin biosynthesis; biotin from 7,8-diaminononanoate: step 1/2.</text>
</comment>
<comment type="subunit">
    <text evidence="1">Homodimer.</text>
</comment>
<comment type="subcellular location">
    <subcellularLocation>
        <location evidence="1">Cytoplasm</location>
    </subcellularLocation>
</comment>
<comment type="similarity">
    <text evidence="1">Belongs to the dethiobiotin synthetase family.</text>
</comment>
<organism>
    <name type="scientific">Neisseria meningitidis serogroup A / serotype 4A (strain DSM 15465 / Z2491)</name>
    <dbReference type="NCBI Taxonomy" id="122587"/>
    <lineage>
        <taxon>Bacteria</taxon>
        <taxon>Pseudomonadati</taxon>
        <taxon>Pseudomonadota</taxon>
        <taxon>Betaproteobacteria</taxon>
        <taxon>Neisseriales</taxon>
        <taxon>Neisseriaceae</taxon>
        <taxon>Neisseria</taxon>
    </lineage>
</organism>
<reference key="1">
    <citation type="journal article" date="2000" name="Nature">
        <title>Complete DNA sequence of a serogroup A strain of Neisseria meningitidis Z2491.</title>
        <authorList>
            <person name="Parkhill J."/>
            <person name="Achtman M."/>
            <person name="James K.D."/>
            <person name="Bentley S.D."/>
            <person name="Churcher C.M."/>
            <person name="Klee S.R."/>
            <person name="Morelli G."/>
            <person name="Basham D."/>
            <person name="Brown D."/>
            <person name="Chillingworth T."/>
            <person name="Davies R.M."/>
            <person name="Davis P."/>
            <person name="Devlin K."/>
            <person name="Feltwell T."/>
            <person name="Hamlin N."/>
            <person name="Holroyd S."/>
            <person name="Jagels K."/>
            <person name="Leather S."/>
            <person name="Moule S."/>
            <person name="Mungall K.L."/>
            <person name="Quail M.A."/>
            <person name="Rajandream M.A."/>
            <person name="Rutherford K.M."/>
            <person name="Simmonds M."/>
            <person name="Skelton J."/>
            <person name="Whitehead S."/>
            <person name="Spratt B.G."/>
            <person name="Barrell B.G."/>
        </authorList>
    </citation>
    <scope>NUCLEOTIDE SEQUENCE [LARGE SCALE GENOMIC DNA]</scope>
    <source>
        <strain>DSM 15465 / Z2491</strain>
    </source>
</reference>
<keyword id="KW-0067">ATP-binding</keyword>
<keyword id="KW-0093">Biotin biosynthesis</keyword>
<keyword id="KW-0963">Cytoplasm</keyword>
<keyword id="KW-0436">Ligase</keyword>
<keyword id="KW-0460">Magnesium</keyword>
<keyword id="KW-0479">Metal-binding</keyword>
<keyword id="KW-0547">Nucleotide-binding</keyword>
<name>BIOD_NEIMA</name>